<gene>
    <name evidence="1" type="primary">pdxH</name>
    <name type="ordered locus">ESA_01997</name>
</gene>
<protein>
    <recommendedName>
        <fullName evidence="1">Pyridoxine/pyridoxamine 5'-phosphate oxidase</fullName>
        <ecNumber evidence="1">1.4.3.5</ecNumber>
    </recommendedName>
    <alternativeName>
        <fullName evidence="1">PNP/PMP oxidase</fullName>
        <shortName evidence="1">PNPOx</shortName>
    </alternativeName>
    <alternativeName>
        <fullName evidence="1">Pyridoxal 5'-phosphate synthase</fullName>
    </alternativeName>
</protein>
<comment type="function">
    <text evidence="1">Catalyzes the oxidation of either pyridoxine 5'-phosphate (PNP) or pyridoxamine 5'-phosphate (PMP) into pyridoxal 5'-phosphate (PLP).</text>
</comment>
<comment type="catalytic activity">
    <reaction evidence="1">
        <text>pyridoxamine 5'-phosphate + O2 + H2O = pyridoxal 5'-phosphate + H2O2 + NH4(+)</text>
        <dbReference type="Rhea" id="RHEA:15817"/>
        <dbReference type="ChEBI" id="CHEBI:15377"/>
        <dbReference type="ChEBI" id="CHEBI:15379"/>
        <dbReference type="ChEBI" id="CHEBI:16240"/>
        <dbReference type="ChEBI" id="CHEBI:28938"/>
        <dbReference type="ChEBI" id="CHEBI:58451"/>
        <dbReference type="ChEBI" id="CHEBI:597326"/>
        <dbReference type="EC" id="1.4.3.5"/>
    </reaction>
</comment>
<comment type="catalytic activity">
    <reaction evidence="1">
        <text>pyridoxine 5'-phosphate + O2 = pyridoxal 5'-phosphate + H2O2</text>
        <dbReference type="Rhea" id="RHEA:15149"/>
        <dbReference type="ChEBI" id="CHEBI:15379"/>
        <dbReference type="ChEBI" id="CHEBI:16240"/>
        <dbReference type="ChEBI" id="CHEBI:58589"/>
        <dbReference type="ChEBI" id="CHEBI:597326"/>
        <dbReference type="EC" id="1.4.3.5"/>
    </reaction>
</comment>
<comment type="cofactor">
    <cofactor evidence="1">
        <name>FMN</name>
        <dbReference type="ChEBI" id="CHEBI:58210"/>
    </cofactor>
    <text evidence="1">Binds 1 FMN per subunit.</text>
</comment>
<comment type="pathway">
    <text evidence="1">Cofactor metabolism; pyridoxal 5'-phosphate salvage; pyridoxal 5'-phosphate from pyridoxamine 5'-phosphate: step 1/1.</text>
</comment>
<comment type="pathway">
    <text evidence="1">Cofactor metabolism; pyridoxal 5'-phosphate salvage; pyridoxal 5'-phosphate from pyridoxine 5'-phosphate: step 1/1.</text>
</comment>
<comment type="subunit">
    <text evidence="1">Homodimer.</text>
</comment>
<comment type="similarity">
    <text evidence="1">Belongs to the pyridoxamine 5'-phosphate oxidase family.</text>
</comment>
<organism>
    <name type="scientific">Cronobacter sakazakii (strain ATCC BAA-894)</name>
    <name type="common">Enterobacter sakazakii</name>
    <dbReference type="NCBI Taxonomy" id="290339"/>
    <lineage>
        <taxon>Bacteria</taxon>
        <taxon>Pseudomonadati</taxon>
        <taxon>Pseudomonadota</taxon>
        <taxon>Gammaproteobacteria</taxon>
        <taxon>Enterobacterales</taxon>
        <taxon>Enterobacteriaceae</taxon>
        <taxon>Cronobacter</taxon>
    </lineage>
</organism>
<proteinExistence type="inferred from homology"/>
<dbReference type="EC" id="1.4.3.5" evidence="1"/>
<dbReference type="EMBL" id="CP000783">
    <property type="protein sequence ID" value="ABU77250.1"/>
    <property type="molecule type" value="Genomic_DNA"/>
</dbReference>
<dbReference type="RefSeq" id="WP_012124910.1">
    <property type="nucleotide sequence ID" value="NC_009778.1"/>
</dbReference>
<dbReference type="SMR" id="A7MMK2"/>
<dbReference type="KEGG" id="esa:ESA_01997"/>
<dbReference type="PATRIC" id="fig|290339.8.peg.1782"/>
<dbReference type="HOGENOM" id="CLU_032263_2_2_6"/>
<dbReference type="UniPathway" id="UPA01068">
    <property type="reaction ID" value="UER00304"/>
</dbReference>
<dbReference type="UniPathway" id="UPA01068">
    <property type="reaction ID" value="UER00305"/>
</dbReference>
<dbReference type="Proteomes" id="UP000000260">
    <property type="component" value="Chromosome"/>
</dbReference>
<dbReference type="GO" id="GO:0010181">
    <property type="term" value="F:FMN binding"/>
    <property type="evidence" value="ECO:0007669"/>
    <property type="project" value="UniProtKB-UniRule"/>
</dbReference>
<dbReference type="GO" id="GO:0004733">
    <property type="term" value="F:pyridoxamine phosphate oxidase activity"/>
    <property type="evidence" value="ECO:0007669"/>
    <property type="project" value="UniProtKB-UniRule"/>
</dbReference>
<dbReference type="GO" id="GO:0008615">
    <property type="term" value="P:pyridoxine biosynthetic process"/>
    <property type="evidence" value="ECO:0007669"/>
    <property type="project" value="UniProtKB-KW"/>
</dbReference>
<dbReference type="FunFam" id="2.30.110.10:FF:000001">
    <property type="entry name" value="Pyridoxine/pyridoxamine 5'-phosphate oxidase"/>
    <property type="match status" value="1"/>
</dbReference>
<dbReference type="Gene3D" id="2.30.110.10">
    <property type="entry name" value="Electron Transport, Fmn-binding Protein, Chain A"/>
    <property type="match status" value="1"/>
</dbReference>
<dbReference type="HAMAP" id="MF_01629">
    <property type="entry name" value="PdxH"/>
    <property type="match status" value="1"/>
</dbReference>
<dbReference type="InterPro" id="IPR000659">
    <property type="entry name" value="Pyridox_Oxase"/>
</dbReference>
<dbReference type="InterPro" id="IPR019740">
    <property type="entry name" value="Pyridox_Oxase_CS"/>
</dbReference>
<dbReference type="InterPro" id="IPR011576">
    <property type="entry name" value="Pyridox_Oxase_N"/>
</dbReference>
<dbReference type="InterPro" id="IPR019576">
    <property type="entry name" value="Pyridoxamine_oxidase_dimer_C"/>
</dbReference>
<dbReference type="InterPro" id="IPR012349">
    <property type="entry name" value="Split_barrel_FMN-bd"/>
</dbReference>
<dbReference type="NCBIfam" id="TIGR00558">
    <property type="entry name" value="pdxH"/>
    <property type="match status" value="1"/>
</dbReference>
<dbReference type="NCBIfam" id="NF004231">
    <property type="entry name" value="PRK05679.1"/>
    <property type="match status" value="1"/>
</dbReference>
<dbReference type="PANTHER" id="PTHR10851:SF0">
    <property type="entry name" value="PYRIDOXINE-5'-PHOSPHATE OXIDASE"/>
    <property type="match status" value="1"/>
</dbReference>
<dbReference type="PANTHER" id="PTHR10851">
    <property type="entry name" value="PYRIDOXINE-5-PHOSPHATE OXIDASE"/>
    <property type="match status" value="1"/>
</dbReference>
<dbReference type="Pfam" id="PF10590">
    <property type="entry name" value="PNP_phzG_C"/>
    <property type="match status" value="1"/>
</dbReference>
<dbReference type="Pfam" id="PF01243">
    <property type="entry name" value="PNPOx_N"/>
    <property type="match status" value="1"/>
</dbReference>
<dbReference type="PIRSF" id="PIRSF000190">
    <property type="entry name" value="Pyd_amn-ph_oxd"/>
    <property type="match status" value="1"/>
</dbReference>
<dbReference type="SUPFAM" id="SSF50475">
    <property type="entry name" value="FMN-binding split barrel"/>
    <property type="match status" value="1"/>
</dbReference>
<dbReference type="PROSITE" id="PS01064">
    <property type="entry name" value="PYRIDOX_OXIDASE"/>
    <property type="match status" value="1"/>
</dbReference>
<feature type="chain" id="PRO_1000069694" description="Pyridoxine/pyridoxamine 5'-phosphate oxidase">
    <location>
        <begin position="1"/>
        <end position="218"/>
    </location>
</feature>
<feature type="binding site" evidence="1">
    <location>
        <begin position="14"/>
        <end position="17"/>
    </location>
    <ligand>
        <name>substrate</name>
    </ligand>
</feature>
<feature type="binding site" evidence="1">
    <location>
        <begin position="67"/>
        <end position="72"/>
    </location>
    <ligand>
        <name>FMN</name>
        <dbReference type="ChEBI" id="CHEBI:58210"/>
    </ligand>
</feature>
<feature type="binding site" evidence="1">
    <location>
        <position position="72"/>
    </location>
    <ligand>
        <name>substrate</name>
    </ligand>
</feature>
<feature type="binding site" evidence="1">
    <location>
        <begin position="82"/>
        <end position="83"/>
    </location>
    <ligand>
        <name>FMN</name>
        <dbReference type="ChEBI" id="CHEBI:58210"/>
    </ligand>
</feature>
<feature type="binding site" evidence="1">
    <location>
        <position position="88"/>
    </location>
    <ligand>
        <name>FMN</name>
        <dbReference type="ChEBI" id="CHEBI:58210"/>
    </ligand>
</feature>
<feature type="binding site" evidence="1">
    <location>
        <position position="89"/>
    </location>
    <ligand>
        <name>FMN</name>
        <dbReference type="ChEBI" id="CHEBI:58210"/>
    </ligand>
</feature>
<feature type="binding site" evidence="1">
    <location>
        <position position="111"/>
    </location>
    <ligand>
        <name>FMN</name>
        <dbReference type="ChEBI" id="CHEBI:58210"/>
    </ligand>
</feature>
<feature type="binding site" evidence="1">
    <location>
        <position position="129"/>
    </location>
    <ligand>
        <name>substrate</name>
    </ligand>
</feature>
<feature type="binding site" evidence="1">
    <location>
        <position position="133"/>
    </location>
    <ligand>
        <name>substrate</name>
    </ligand>
</feature>
<feature type="binding site" evidence="1">
    <location>
        <position position="137"/>
    </location>
    <ligand>
        <name>substrate</name>
    </ligand>
</feature>
<feature type="binding site" evidence="1">
    <location>
        <begin position="146"/>
        <end position="147"/>
    </location>
    <ligand>
        <name>FMN</name>
        <dbReference type="ChEBI" id="CHEBI:58210"/>
    </ligand>
</feature>
<feature type="binding site" evidence="1">
    <location>
        <position position="191"/>
    </location>
    <ligand>
        <name>FMN</name>
        <dbReference type="ChEBI" id="CHEBI:58210"/>
    </ligand>
</feature>
<feature type="binding site" evidence="1">
    <location>
        <begin position="197"/>
        <end position="199"/>
    </location>
    <ligand>
        <name>substrate</name>
    </ligand>
</feature>
<feature type="binding site" evidence="1">
    <location>
        <position position="201"/>
    </location>
    <ligand>
        <name>FMN</name>
        <dbReference type="ChEBI" id="CHEBI:58210"/>
    </ligand>
</feature>
<name>PDXH_CROS8</name>
<evidence type="ECO:0000255" key="1">
    <source>
        <dbReference type="HAMAP-Rule" id="MF_01629"/>
    </source>
</evidence>
<accession>A7MMK2</accession>
<keyword id="KW-0285">Flavoprotein</keyword>
<keyword id="KW-0288">FMN</keyword>
<keyword id="KW-0560">Oxidoreductase</keyword>
<keyword id="KW-0664">Pyridoxine biosynthesis</keyword>
<keyword id="KW-1185">Reference proteome</keyword>
<sequence>MSDIDHLQQIAHLRREYTKGGLRRRDLTETPLPLFERWLAQACDAKLADPTAMVVATVDEHGQPYQRIVLLKHFDERGMVFYTNLGSRKAHHLENNPRISLLFPWHMLERQVMVTGKAERLSTLEVVKYFHSRPRDSQIGAWVSKQSSRISARGVLESKFLELKQKFQQGEVPLPSFWGGFRVSLEQVEFWQGGEHRLHDRFLYQRDGDGWKIDRLAP</sequence>
<reference key="1">
    <citation type="journal article" date="2010" name="PLoS ONE">
        <title>Genome sequence of Cronobacter sakazakii BAA-894 and comparative genomic hybridization analysis with other Cronobacter species.</title>
        <authorList>
            <person name="Kucerova E."/>
            <person name="Clifton S.W."/>
            <person name="Xia X.Q."/>
            <person name="Long F."/>
            <person name="Porwollik S."/>
            <person name="Fulton L."/>
            <person name="Fronick C."/>
            <person name="Minx P."/>
            <person name="Kyung K."/>
            <person name="Warren W."/>
            <person name="Fulton R."/>
            <person name="Feng D."/>
            <person name="Wollam A."/>
            <person name="Shah N."/>
            <person name="Bhonagiri V."/>
            <person name="Nash W.E."/>
            <person name="Hallsworth-Pepin K."/>
            <person name="Wilson R.K."/>
            <person name="McClelland M."/>
            <person name="Forsythe S.J."/>
        </authorList>
    </citation>
    <scope>NUCLEOTIDE SEQUENCE [LARGE SCALE GENOMIC DNA]</scope>
    <source>
        <strain>ATCC BAA-894</strain>
    </source>
</reference>